<feature type="chain" id="PRO_0000071284" description="Uncharacterized protein L456">
    <location>
        <begin position="1"/>
        <end position="175"/>
    </location>
</feature>
<name>YL456_MIMIV</name>
<reference key="1">
    <citation type="journal article" date="2004" name="Science">
        <title>The 1.2-megabase genome sequence of Mimivirus.</title>
        <authorList>
            <person name="Raoult D."/>
            <person name="Audic S."/>
            <person name="Robert C."/>
            <person name="Abergel C."/>
            <person name="Renesto P."/>
            <person name="Ogata H."/>
            <person name="La Scola B."/>
            <person name="Susan M."/>
            <person name="Claverie J.-M."/>
        </authorList>
    </citation>
    <scope>NUCLEOTIDE SEQUENCE [LARGE SCALE GENOMIC DNA]</scope>
    <source>
        <strain>Rowbotham-Bradford</strain>
    </source>
</reference>
<sequence length="175" mass="20972">MSVLVKRKMIETPISLSKFRYKRFCLPKIHPDILFETNDLPFFVKKLVYLLRKKYDMVNIDDNKLNTIYISTTINGDNFEVLLSFQKKLYINPDINFMAIDVTIKTKESMEFCIKKQCYDHIITIIEKITDKKVYANLPNFFYPKFNQLIEHIIDLNICKTFNNVEKWYFSKLVN</sequence>
<proteinExistence type="predicted"/>
<keyword id="KW-1185">Reference proteome</keyword>
<protein>
    <recommendedName>
        <fullName>Uncharacterized protein L456</fullName>
    </recommendedName>
</protein>
<organism>
    <name type="scientific">Acanthamoeba polyphaga mimivirus</name>
    <name type="common">APMV</name>
    <dbReference type="NCBI Taxonomy" id="212035"/>
    <lineage>
        <taxon>Viruses</taxon>
        <taxon>Varidnaviria</taxon>
        <taxon>Bamfordvirae</taxon>
        <taxon>Nucleocytoviricota</taxon>
        <taxon>Megaviricetes</taxon>
        <taxon>Imitervirales</taxon>
        <taxon>Mimiviridae</taxon>
        <taxon>Megamimivirinae</taxon>
        <taxon>Mimivirus</taxon>
        <taxon>Mimivirus bradfordmassiliense</taxon>
    </lineage>
</organism>
<dbReference type="EMBL" id="AY653733">
    <property type="protein sequence ID" value="AAV50722.1"/>
    <property type="molecule type" value="Genomic_DNA"/>
</dbReference>
<dbReference type="KEGG" id="vg:9925081"/>
<dbReference type="Proteomes" id="UP000001134">
    <property type="component" value="Genome"/>
</dbReference>
<organismHost>
    <name type="scientific">Acanthamoeba polyphaga</name>
    <name type="common">Amoeba</name>
    <dbReference type="NCBI Taxonomy" id="5757"/>
</organismHost>
<gene>
    <name type="ordered locus">MIMI_L456</name>
</gene>
<accession>Q5UQP6</accession>